<gene>
    <name evidence="1" type="primary">mobA</name>
    <name type="ordered locus">TK2002</name>
</gene>
<sequence>MIGAVLAGGRGRRFGGDKLLFRISGKPLLLYTIERLEQAEKIDEIVLVASKENAEKLRDFGHDVVVDELMIGPMGGIFTALSLGDAFVVAGDMPLLVPEFIDFIVERFEEAKKPACVPRWSNGYLEPLHAAYSSSFRDFLEERIKSRNYAINQAIRESDACYIEIEKLPEGWRESFFNVNTREDLRRLTPLRTRDNPDTLR</sequence>
<protein>
    <recommendedName>
        <fullName evidence="1">Probable molybdenum cofactor guanylyltransferase</fullName>
        <shortName evidence="1">MoCo guanylyltransferase</shortName>
        <ecNumber evidence="1">2.7.7.77</ecNumber>
    </recommendedName>
    <alternativeName>
        <fullName evidence="1">GTP:molybdopterin guanylyltransferase</fullName>
    </alternativeName>
    <alternativeName>
        <fullName evidence="1">Mo-MPT guanylyltransferase</fullName>
    </alternativeName>
    <alternativeName>
        <fullName evidence="1">Molybdopterin guanylyltransferase</fullName>
    </alternativeName>
    <alternativeName>
        <fullName evidence="1">Molybdopterin-guanine dinucleotide synthase</fullName>
        <shortName evidence="1">MGD synthase</shortName>
    </alternativeName>
</protein>
<reference key="1">
    <citation type="journal article" date="2005" name="Genome Res.">
        <title>Complete genome sequence of the hyperthermophilic archaeon Thermococcus kodakaraensis KOD1 and comparison with Pyrococcus genomes.</title>
        <authorList>
            <person name="Fukui T."/>
            <person name="Atomi H."/>
            <person name="Kanai T."/>
            <person name="Matsumi R."/>
            <person name="Fujiwara S."/>
            <person name="Imanaka T."/>
        </authorList>
    </citation>
    <scope>NUCLEOTIDE SEQUENCE [LARGE SCALE GENOMIC DNA]</scope>
    <source>
        <strain>ATCC BAA-918 / JCM 12380 / KOD1</strain>
    </source>
</reference>
<evidence type="ECO:0000255" key="1">
    <source>
        <dbReference type="HAMAP-Rule" id="MF_00316"/>
    </source>
</evidence>
<organism>
    <name type="scientific">Thermococcus kodakarensis (strain ATCC BAA-918 / JCM 12380 / KOD1)</name>
    <name type="common">Pyrococcus kodakaraensis (strain KOD1)</name>
    <dbReference type="NCBI Taxonomy" id="69014"/>
    <lineage>
        <taxon>Archaea</taxon>
        <taxon>Methanobacteriati</taxon>
        <taxon>Methanobacteriota</taxon>
        <taxon>Thermococci</taxon>
        <taxon>Thermococcales</taxon>
        <taxon>Thermococcaceae</taxon>
        <taxon>Thermococcus</taxon>
    </lineage>
</organism>
<proteinExistence type="inferred from homology"/>
<name>MOBA_THEKO</name>
<comment type="function">
    <text evidence="1">Transfers a GMP moiety from GTP to Mo-molybdopterin (Mo-MPT) cofactor (Moco or molybdenum cofactor) to form Mo-molybdopterin guanine dinucleotide (Mo-MGD) cofactor.</text>
</comment>
<comment type="catalytic activity">
    <reaction evidence="1">
        <text>Mo-molybdopterin + GTP + H(+) = Mo-molybdopterin guanine dinucleotide + diphosphate</text>
        <dbReference type="Rhea" id="RHEA:34243"/>
        <dbReference type="ChEBI" id="CHEBI:15378"/>
        <dbReference type="ChEBI" id="CHEBI:33019"/>
        <dbReference type="ChEBI" id="CHEBI:37565"/>
        <dbReference type="ChEBI" id="CHEBI:71302"/>
        <dbReference type="ChEBI" id="CHEBI:71310"/>
        <dbReference type="EC" id="2.7.7.77"/>
    </reaction>
</comment>
<comment type="cofactor">
    <cofactor evidence="1">
        <name>Mg(2+)</name>
        <dbReference type="ChEBI" id="CHEBI:18420"/>
    </cofactor>
</comment>
<comment type="subcellular location">
    <subcellularLocation>
        <location evidence="1">Cytoplasm</location>
    </subcellularLocation>
</comment>
<comment type="domain">
    <text evidence="1">The N-terminal domain determines nucleotide recognition and specific binding, while the C-terminal domain determines the specific binding to the target protein.</text>
</comment>
<comment type="similarity">
    <text evidence="1">Belongs to the MobA family.</text>
</comment>
<feature type="chain" id="PRO_0000134934" description="Probable molybdenum cofactor guanylyltransferase">
    <location>
        <begin position="1"/>
        <end position="201"/>
    </location>
</feature>
<feature type="binding site" evidence="1">
    <location>
        <begin position="6"/>
        <end position="8"/>
    </location>
    <ligand>
        <name>GTP</name>
        <dbReference type="ChEBI" id="CHEBI:37565"/>
    </ligand>
</feature>
<feature type="binding site" evidence="1">
    <location>
        <position position="18"/>
    </location>
    <ligand>
        <name>GTP</name>
        <dbReference type="ChEBI" id="CHEBI:37565"/>
    </ligand>
</feature>
<feature type="binding site" evidence="1">
    <location>
        <position position="67"/>
    </location>
    <ligand>
        <name>GTP</name>
        <dbReference type="ChEBI" id="CHEBI:37565"/>
    </ligand>
</feature>
<feature type="binding site" evidence="1">
    <location>
        <position position="92"/>
    </location>
    <ligand>
        <name>GTP</name>
        <dbReference type="ChEBI" id="CHEBI:37565"/>
    </ligand>
</feature>
<feature type="binding site" evidence="1">
    <location>
        <position position="92"/>
    </location>
    <ligand>
        <name>Mg(2+)</name>
        <dbReference type="ChEBI" id="CHEBI:18420"/>
    </ligand>
</feature>
<keyword id="KW-0963">Cytoplasm</keyword>
<keyword id="KW-0342">GTP-binding</keyword>
<keyword id="KW-0460">Magnesium</keyword>
<keyword id="KW-0479">Metal-binding</keyword>
<keyword id="KW-0501">Molybdenum cofactor biosynthesis</keyword>
<keyword id="KW-0547">Nucleotide-binding</keyword>
<keyword id="KW-1185">Reference proteome</keyword>
<keyword id="KW-0808">Transferase</keyword>
<dbReference type="EC" id="2.7.7.77" evidence="1"/>
<dbReference type="EMBL" id="AP006878">
    <property type="protein sequence ID" value="BAD86191.1"/>
    <property type="molecule type" value="Genomic_DNA"/>
</dbReference>
<dbReference type="RefSeq" id="WP_011250952.1">
    <property type="nucleotide sequence ID" value="NC_006624.1"/>
</dbReference>
<dbReference type="SMR" id="Q5JIH9"/>
<dbReference type="STRING" id="69014.TK2002"/>
<dbReference type="EnsemblBacteria" id="BAD86191">
    <property type="protein sequence ID" value="BAD86191"/>
    <property type="gene ID" value="TK2002"/>
</dbReference>
<dbReference type="GeneID" id="78448537"/>
<dbReference type="KEGG" id="tko:TK2002"/>
<dbReference type="PATRIC" id="fig|69014.16.peg.1955"/>
<dbReference type="eggNOG" id="arCOG01872">
    <property type="taxonomic scope" value="Archaea"/>
</dbReference>
<dbReference type="HOGENOM" id="CLU_055597_2_2_2"/>
<dbReference type="InParanoid" id="Q5JIH9"/>
<dbReference type="OrthoDB" id="28434at2157"/>
<dbReference type="PhylomeDB" id="Q5JIH9"/>
<dbReference type="Proteomes" id="UP000000536">
    <property type="component" value="Chromosome"/>
</dbReference>
<dbReference type="GO" id="GO:0005737">
    <property type="term" value="C:cytoplasm"/>
    <property type="evidence" value="ECO:0007669"/>
    <property type="project" value="UniProtKB-SubCell"/>
</dbReference>
<dbReference type="GO" id="GO:0005525">
    <property type="term" value="F:GTP binding"/>
    <property type="evidence" value="ECO:0007669"/>
    <property type="project" value="UniProtKB-UniRule"/>
</dbReference>
<dbReference type="GO" id="GO:0046872">
    <property type="term" value="F:metal ion binding"/>
    <property type="evidence" value="ECO:0007669"/>
    <property type="project" value="UniProtKB-KW"/>
</dbReference>
<dbReference type="GO" id="GO:0061603">
    <property type="term" value="F:molybdenum cofactor guanylyltransferase activity"/>
    <property type="evidence" value="ECO:0007669"/>
    <property type="project" value="UniProtKB-EC"/>
</dbReference>
<dbReference type="GO" id="GO:0016779">
    <property type="term" value="F:nucleotidyltransferase activity"/>
    <property type="evidence" value="ECO:0000318"/>
    <property type="project" value="GO_Central"/>
</dbReference>
<dbReference type="GO" id="GO:0006777">
    <property type="term" value="P:Mo-molybdopterin cofactor biosynthetic process"/>
    <property type="evidence" value="ECO:0007669"/>
    <property type="project" value="UniProtKB-KW"/>
</dbReference>
<dbReference type="CDD" id="cd02503">
    <property type="entry name" value="MobA"/>
    <property type="match status" value="1"/>
</dbReference>
<dbReference type="Gene3D" id="3.90.550.10">
    <property type="entry name" value="Spore Coat Polysaccharide Biosynthesis Protein SpsA, Chain A"/>
    <property type="match status" value="1"/>
</dbReference>
<dbReference type="HAMAP" id="MF_00316">
    <property type="entry name" value="MobA"/>
    <property type="match status" value="1"/>
</dbReference>
<dbReference type="InterPro" id="IPR025877">
    <property type="entry name" value="MobA-like_NTP_Trfase"/>
</dbReference>
<dbReference type="InterPro" id="IPR013482">
    <property type="entry name" value="Molybde_CF_guanTrfase"/>
</dbReference>
<dbReference type="InterPro" id="IPR029044">
    <property type="entry name" value="Nucleotide-diphossugar_trans"/>
</dbReference>
<dbReference type="NCBIfam" id="NF001457">
    <property type="entry name" value="PRK00317.1-3"/>
    <property type="match status" value="1"/>
</dbReference>
<dbReference type="PANTHER" id="PTHR19136">
    <property type="entry name" value="MOLYBDENUM COFACTOR GUANYLYLTRANSFERASE"/>
    <property type="match status" value="1"/>
</dbReference>
<dbReference type="PANTHER" id="PTHR19136:SF81">
    <property type="entry name" value="MOLYBDENUM COFACTOR GUANYLYLTRANSFERASE"/>
    <property type="match status" value="1"/>
</dbReference>
<dbReference type="Pfam" id="PF12804">
    <property type="entry name" value="NTP_transf_3"/>
    <property type="match status" value="1"/>
</dbReference>
<dbReference type="SUPFAM" id="SSF53448">
    <property type="entry name" value="Nucleotide-diphospho-sugar transferases"/>
    <property type="match status" value="1"/>
</dbReference>
<accession>Q5JIH9</accession>